<reference key="1">
    <citation type="journal article" date="2006" name="Nature">
        <title>Insights from the genome of the biotrophic fungal plant pathogen Ustilago maydis.</title>
        <authorList>
            <person name="Kaemper J."/>
            <person name="Kahmann R."/>
            <person name="Boelker M."/>
            <person name="Ma L.-J."/>
            <person name="Brefort T."/>
            <person name="Saville B.J."/>
            <person name="Banuett F."/>
            <person name="Kronstad J.W."/>
            <person name="Gold S.E."/>
            <person name="Mueller O."/>
            <person name="Perlin M.H."/>
            <person name="Woesten H.A.B."/>
            <person name="de Vries R."/>
            <person name="Ruiz-Herrera J."/>
            <person name="Reynaga-Pena C.G."/>
            <person name="Snetselaar K."/>
            <person name="McCann M."/>
            <person name="Perez-Martin J."/>
            <person name="Feldbruegge M."/>
            <person name="Basse C.W."/>
            <person name="Steinberg G."/>
            <person name="Ibeas J.I."/>
            <person name="Holloman W."/>
            <person name="Guzman P."/>
            <person name="Farman M.L."/>
            <person name="Stajich J.E."/>
            <person name="Sentandreu R."/>
            <person name="Gonzalez-Prieto J.M."/>
            <person name="Kennell J.C."/>
            <person name="Molina L."/>
            <person name="Schirawski J."/>
            <person name="Mendoza-Mendoza A."/>
            <person name="Greilinger D."/>
            <person name="Muench K."/>
            <person name="Roessel N."/>
            <person name="Scherer M."/>
            <person name="Vranes M."/>
            <person name="Ladendorf O."/>
            <person name="Vincon V."/>
            <person name="Fuchs U."/>
            <person name="Sandrock B."/>
            <person name="Meng S."/>
            <person name="Ho E.C.H."/>
            <person name="Cahill M.J."/>
            <person name="Boyce K.J."/>
            <person name="Klose J."/>
            <person name="Klosterman S.J."/>
            <person name="Deelstra H.J."/>
            <person name="Ortiz-Castellanos L."/>
            <person name="Li W."/>
            <person name="Sanchez-Alonso P."/>
            <person name="Schreier P.H."/>
            <person name="Haeuser-Hahn I."/>
            <person name="Vaupel M."/>
            <person name="Koopmann E."/>
            <person name="Friedrich G."/>
            <person name="Voss H."/>
            <person name="Schlueter T."/>
            <person name="Margolis J."/>
            <person name="Platt D."/>
            <person name="Swimmer C."/>
            <person name="Gnirke A."/>
            <person name="Chen F."/>
            <person name="Vysotskaia V."/>
            <person name="Mannhaupt G."/>
            <person name="Gueldener U."/>
            <person name="Muensterkoetter M."/>
            <person name="Haase D."/>
            <person name="Oesterheld M."/>
            <person name="Mewes H.-W."/>
            <person name="Mauceli E.W."/>
            <person name="DeCaprio D."/>
            <person name="Wade C.M."/>
            <person name="Butler J."/>
            <person name="Young S.K."/>
            <person name="Jaffe D.B."/>
            <person name="Calvo S.E."/>
            <person name="Nusbaum C."/>
            <person name="Galagan J.E."/>
            <person name="Birren B.W."/>
        </authorList>
    </citation>
    <scope>NUCLEOTIDE SEQUENCE [LARGE SCALE GENOMIC DNA]</scope>
    <source>
        <strain>DSM 14603 / FGSC 9021 / UM521</strain>
    </source>
</reference>
<reference key="2">
    <citation type="submission" date="2014-09" db="EMBL/GenBank/DDBJ databases">
        <authorList>
            <person name="Gueldener U."/>
            <person name="Muensterkoetter M."/>
            <person name="Walter M.C."/>
            <person name="Mannhaupt G."/>
            <person name="Kahmann R."/>
        </authorList>
    </citation>
    <scope>GENOME REANNOTATION</scope>
    <source>
        <strain>DSM 14603 / FGSC 9021 / UM521</strain>
    </source>
</reference>
<protein>
    <recommendedName>
        <fullName>Putative heme-binding peroxidase</fullName>
        <ecNumber>1.11.1.-</ecNumber>
    </recommendedName>
</protein>
<proteinExistence type="inferred from homology"/>
<comment type="function">
    <text evidence="1">Destroys radicals which are normally produced within the cells and which are toxic to biological systems.</text>
</comment>
<comment type="cofactor">
    <cofactor evidence="2">
        <name>heme b</name>
        <dbReference type="ChEBI" id="CHEBI:60344"/>
    </cofactor>
    <text evidence="2">Binds 1 heme b (iron(II)-protoporphyrin IX) group per subunit.</text>
</comment>
<comment type="similarity">
    <text evidence="5">Belongs to the peroxidase family. Cytochrome c peroxidase subfamily.</text>
</comment>
<evidence type="ECO:0000250" key="1"/>
<evidence type="ECO:0000255" key="2">
    <source>
        <dbReference type="PROSITE-ProRule" id="PRU00297"/>
    </source>
</evidence>
<evidence type="ECO:0000255" key="3">
    <source>
        <dbReference type="PROSITE-ProRule" id="PRU10012"/>
    </source>
</evidence>
<evidence type="ECO:0000256" key="4">
    <source>
        <dbReference type="SAM" id="MobiDB-lite"/>
    </source>
</evidence>
<evidence type="ECO:0000305" key="5"/>
<organism>
    <name type="scientific">Mycosarcoma maydis</name>
    <name type="common">Corn smut fungus</name>
    <name type="synonym">Ustilago maydis</name>
    <dbReference type="NCBI Taxonomy" id="5270"/>
    <lineage>
        <taxon>Eukaryota</taxon>
        <taxon>Fungi</taxon>
        <taxon>Dikarya</taxon>
        <taxon>Basidiomycota</taxon>
        <taxon>Ustilaginomycotina</taxon>
        <taxon>Ustilaginomycetes</taxon>
        <taxon>Ustilaginales</taxon>
        <taxon>Ustilaginaceae</taxon>
        <taxon>Mycosarcoma</taxon>
    </lineage>
</organism>
<sequence length="330" mass="36483">MSKLGDYAAVKKDILAVLKQPEYDDGSAGPVLVRLAWHASGTYCARTDTGGSNGAGMRYEAEGGDPANAGLQHARVFLEPIKEKHSWITYADLWTLAGVVAIEAMGGPSIQWKPGRTDFADDSRLPPRGRLPDGAQGADHLRFIFNRMGFNDQEIVALSGAHNLGRCHSDRSGFEGPWVNSPTRFSNQYYKLLLKLKWQPKKWDGPFQYVAKAPGADDDDEQLMMLPTDYALIQDEKMRPWVEKYAEDRDAFFNDFAKVFAKLIELGVYRDESGIARADKMKQFKGEYKSAPQKSPVPGAPGAGKDGEANPLARQNERAHGQAQHALAKL</sequence>
<feature type="chain" id="PRO_0000055589" description="Putative heme-binding peroxidase">
    <location>
        <begin position="1"/>
        <end position="330"/>
    </location>
</feature>
<feature type="region of interest" description="Disordered" evidence="4">
    <location>
        <begin position="286"/>
        <end position="330"/>
    </location>
</feature>
<feature type="active site" description="Proton acceptor" evidence="2 3">
    <location>
        <position position="38"/>
    </location>
</feature>
<feature type="active site" description="Tryptophan radical intermediate" evidence="1">
    <location>
        <position position="178"/>
    </location>
</feature>
<feature type="binding site" description="axial binding residue" evidence="2">
    <location>
        <position position="162"/>
    </location>
    <ligand>
        <name>heme b</name>
        <dbReference type="ChEBI" id="CHEBI:60344"/>
    </ligand>
    <ligandPart>
        <name>Fe</name>
        <dbReference type="ChEBI" id="CHEBI:18248"/>
    </ligandPart>
</feature>
<feature type="site" description="Transition state stabilizer" evidence="2">
    <location>
        <position position="34"/>
    </location>
</feature>
<gene>
    <name type="primary">CCP2</name>
    <name type="ORF">UMAG_01947</name>
</gene>
<keyword id="KW-0349">Heme</keyword>
<keyword id="KW-0408">Iron</keyword>
<keyword id="KW-0479">Metal-binding</keyword>
<keyword id="KW-0560">Oxidoreductase</keyword>
<keyword id="KW-0575">Peroxidase</keyword>
<keyword id="KW-1185">Reference proteome</keyword>
<accession>Q4PD66</accession>
<accession>A0A0D1E524</accession>
<name>CCPR2_MYCMD</name>
<dbReference type="EC" id="1.11.1.-"/>
<dbReference type="EMBL" id="CM003142">
    <property type="protein sequence ID" value="KIS70796.1"/>
    <property type="molecule type" value="Genomic_DNA"/>
</dbReference>
<dbReference type="RefSeq" id="XP_011387867.1">
    <property type="nucleotide sequence ID" value="XM_011389565.1"/>
</dbReference>
<dbReference type="SMR" id="Q4PD66"/>
<dbReference type="STRING" id="237631.Q4PD66"/>
<dbReference type="PeroxiBase" id="2356">
    <property type="entry name" value="UmCcP01"/>
</dbReference>
<dbReference type="EnsemblFungi" id="KIS70796">
    <property type="protein sequence ID" value="KIS70796"/>
    <property type="gene ID" value="UMAG_01947"/>
</dbReference>
<dbReference type="GeneID" id="23562813"/>
<dbReference type="KEGG" id="uma:UMAG_01947"/>
<dbReference type="VEuPathDB" id="FungiDB:UMAG_01947"/>
<dbReference type="eggNOG" id="ENOG502QR1E">
    <property type="taxonomic scope" value="Eukaryota"/>
</dbReference>
<dbReference type="HOGENOM" id="CLU_036959_0_1_1"/>
<dbReference type="InParanoid" id="Q4PD66"/>
<dbReference type="OMA" id="GAWVNNP"/>
<dbReference type="OrthoDB" id="2859658at2759"/>
<dbReference type="PHI-base" id="PHI:854"/>
<dbReference type="Proteomes" id="UP000000561">
    <property type="component" value="Chromosome 3"/>
</dbReference>
<dbReference type="GO" id="GO:0020037">
    <property type="term" value="F:heme binding"/>
    <property type="evidence" value="ECO:0007669"/>
    <property type="project" value="InterPro"/>
</dbReference>
<dbReference type="GO" id="GO:0046872">
    <property type="term" value="F:metal ion binding"/>
    <property type="evidence" value="ECO:0007669"/>
    <property type="project" value="UniProtKB-KW"/>
</dbReference>
<dbReference type="GO" id="GO:0004601">
    <property type="term" value="F:peroxidase activity"/>
    <property type="evidence" value="ECO:0000318"/>
    <property type="project" value="GO_Central"/>
</dbReference>
<dbReference type="GO" id="GO:0034599">
    <property type="term" value="P:cellular response to oxidative stress"/>
    <property type="evidence" value="ECO:0000318"/>
    <property type="project" value="GO_Central"/>
</dbReference>
<dbReference type="GO" id="GO:0042744">
    <property type="term" value="P:hydrogen peroxide catabolic process"/>
    <property type="evidence" value="ECO:0000318"/>
    <property type="project" value="GO_Central"/>
</dbReference>
<dbReference type="GO" id="GO:0000302">
    <property type="term" value="P:response to reactive oxygen species"/>
    <property type="evidence" value="ECO:0000318"/>
    <property type="project" value="GO_Central"/>
</dbReference>
<dbReference type="CDD" id="cd00691">
    <property type="entry name" value="ascorbate_peroxidase"/>
    <property type="match status" value="1"/>
</dbReference>
<dbReference type="FunFam" id="1.10.420.10:FF:000009">
    <property type="entry name" value="Ascorbate peroxidase"/>
    <property type="match status" value="1"/>
</dbReference>
<dbReference type="FunFam" id="1.10.520.10:FF:000005">
    <property type="entry name" value="Cytochrome c peroxidase"/>
    <property type="match status" value="1"/>
</dbReference>
<dbReference type="Gene3D" id="1.10.520.10">
    <property type="match status" value="1"/>
</dbReference>
<dbReference type="Gene3D" id="1.10.420.10">
    <property type="entry name" value="Peroxidase, domain 2"/>
    <property type="match status" value="1"/>
</dbReference>
<dbReference type="InterPro" id="IPR044831">
    <property type="entry name" value="Ccp1-like"/>
</dbReference>
<dbReference type="InterPro" id="IPR002016">
    <property type="entry name" value="Haem_peroxidase"/>
</dbReference>
<dbReference type="InterPro" id="IPR010255">
    <property type="entry name" value="Haem_peroxidase_sf"/>
</dbReference>
<dbReference type="InterPro" id="IPR002207">
    <property type="entry name" value="Peroxidase_I"/>
</dbReference>
<dbReference type="InterPro" id="IPR019794">
    <property type="entry name" value="Peroxidases_AS"/>
</dbReference>
<dbReference type="PANTHER" id="PTHR31356:SF36">
    <property type="entry name" value="L-ASCORBATE PEROXIDASE 3"/>
    <property type="match status" value="1"/>
</dbReference>
<dbReference type="PANTHER" id="PTHR31356">
    <property type="entry name" value="THYLAKOID LUMENAL 29 KDA PROTEIN, CHLOROPLASTIC-RELATED"/>
    <property type="match status" value="1"/>
</dbReference>
<dbReference type="Pfam" id="PF00141">
    <property type="entry name" value="peroxidase"/>
    <property type="match status" value="1"/>
</dbReference>
<dbReference type="PRINTS" id="PR00459">
    <property type="entry name" value="ASPEROXIDASE"/>
</dbReference>
<dbReference type="PRINTS" id="PR00458">
    <property type="entry name" value="PEROXIDASE"/>
</dbReference>
<dbReference type="SUPFAM" id="SSF48113">
    <property type="entry name" value="Heme-dependent peroxidases"/>
    <property type="match status" value="1"/>
</dbReference>
<dbReference type="PROSITE" id="PS00436">
    <property type="entry name" value="PEROXIDASE_2"/>
    <property type="match status" value="1"/>
</dbReference>
<dbReference type="PROSITE" id="PS50873">
    <property type="entry name" value="PEROXIDASE_4"/>
    <property type="match status" value="1"/>
</dbReference>